<evidence type="ECO:0000255" key="1">
    <source>
        <dbReference type="HAMAP-Rule" id="MF_00395"/>
    </source>
</evidence>
<organism>
    <name type="scientific">Ipomoea purpurea</name>
    <name type="common">Common morning glory</name>
    <name type="synonym">Pharbitis purpurea</name>
    <dbReference type="NCBI Taxonomy" id="4121"/>
    <lineage>
        <taxon>Eukaryota</taxon>
        <taxon>Viridiplantae</taxon>
        <taxon>Streptophyta</taxon>
        <taxon>Embryophyta</taxon>
        <taxon>Tracheophyta</taxon>
        <taxon>Spermatophyta</taxon>
        <taxon>Magnoliopsida</taxon>
        <taxon>eudicotyledons</taxon>
        <taxon>Gunneridae</taxon>
        <taxon>Pentapetalae</taxon>
        <taxon>asterids</taxon>
        <taxon>lamiids</taxon>
        <taxon>Solanales</taxon>
        <taxon>Convolvulaceae</taxon>
        <taxon>Ipomoeeae</taxon>
        <taxon>Ipomoea</taxon>
    </lineage>
</organism>
<feature type="chain" id="PRO_0000355444" description="Cytochrome b6-f complex subunit 8">
    <location>
        <begin position="1"/>
        <end position="29"/>
    </location>
</feature>
<feature type="transmembrane region" description="Helical" evidence="1">
    <location>
        <begin position="3"/>
        <end position="23"/>
    </location>
</feature>
<geneLocation type="chloroplast"/>
<proteinExistence type="inferred from homology"/>
<name>PETN_IPOPU</name>
<gene>
    <name evidence="1" type="primary">petN</name>
</gene>
<comment type="function">
    <text evidence="1">Component of the cytochrome b6-f complex, which mediates electron transfer between photosystem II (PSII) and photosystem I (PSI), cyclic electron flow around PSI, and state transitions.</text>
</comment>
<comment type="subunit">
    <text evidence="1">The 4 large subunits of the cytochrome b6-f complex are cytochrome b6, subunit IV (17 kDa polypeptide, PetD), cytochrome f and the Rieske protein, while the 4 small subunits are PetG, PetL, PetM and PetN. The complex functions as a dimer.</text>
</comment>
<comment type="subcellular location">
    <subcellularLocation>
        <location evidence="1">Plastid</location>
        <location evidence="1">Chloroplast thylakoid membrane</location>
        <topology evidence="1">Single-pass membrane protein</topology>
    </subcellularLocation>
</comment>
<comment type="similarity">
    <text evidence="1">Belongs to the PetN family.</text>
</comment>
<dbReference type="EMBL" id="EU118126">
    <property type="protein sequence ID" value="ABV02341.1"/>
    <property type="molecule type" value="Genomic_DNA"/>
</dbReference>
<dbReference type="RefSeq" id="YP_001468301.1">
    <property type="nucleotide sequence ID" value="NC_009808.1"/>
</dbReference>
<dbReference type="SMR" id="A7Y3C0"/>
<dbReference type="GeneID" id="5601342"/>
<dbReference type="GO" id="GO:0009535">
    <property type="term" value="C:chloroplast thylakoid membrane"/>
    <property type="evidence" value="ECO:0007669"/>
    <property type="project" value="UniProtKB-SubCell"/>
</dbReference>
<dbReference type="GO" id="GO:0009512">
    <property type="term" value="C:cytochrome b6f complex"/>
    <property type="evidence" value="ECO:0007669"/>
    <property type="project" value="InterPro"/>
</dbReference>
<dbReference type="GO" id="GO:0045158">
    <property type="term" value="F:electron transporter, transferring electrons within cytochrome b6/f complex of photosystem II activity"/>
    <property type="evidence" value="ECO:0007669"/>
    <property type="project" value="InterPro"/>
</dbReference>
<dbReference type="GO" id="GO:0017004">
    <property type="term" value="P:cytochrome complex assembly"/>
    <property type="evidence" value="ECO:0007669"/>
    <property type="project" value="UniProtKB-UniRule"/>
</dbReference>
<dbReference type="GO" id="GO:0015979">
    <property type="term" value="P:photosynthesis"/>
    <property type="evidence" value="ECO:0007669"/>
    <property type="project" value="UniProtKB-KW"/>
</dbReference>
<dbReference type="HAMAP" id="MF_00395">
    <property type="entry name" value="Cytb6_f_PetN"/>
    <property type="match status" value="1"/>
</dbReference>
<dbReference type="InterPro" id="IPR036143">
    <property type="entry name" value="Cytochr_b6-f_cplx_su8_sf"/>
</dbReference>
<dbReference type="InterPro" id="IPR005497">
    <property type="entry name" value="Cytochrome_b6-f_cplx_su8"/>
</dbReference>
<dbReference type="Pfam" id="PF03742">
    <property type="entry name" value="PetN"/>
    <property type="match status" value="1"/>
</dbReference>
<dbReference type="SUPFAM" id="SSF103451">
    <property type="entry name" value="PetN subunit of the cytochrome b6f complex"/>
    <property type="match status" value="1"/>
</dbReference>
<reference key="1">
    <citation type="journal article" date="2007" name="BMC Plant Biol.">
        <title>Complete plastid genome sequences suggest strong selection for retention of photosynthetic genes in the parasitic plant genus Cuscuta.</title>
        <authorList>
            <person name="McNeal J.R."/>
            <person name="Kuehl J.V."/>
            <person name="Boore J.L."/>
            <person name="dePamphilis C.W."/>
        </authorList>
    </citation>
    <scope>NUCLEOTIDE SEQUENCE [LARGE SCALE GENOMIC DNA]</scope>
</reference>
<accession>A7Y3C0</accession>
<keyword id="KW-0150">Chloroplast</keyword>
<keyword id="KW-0249">Electron transport</keyword>
<keyword id="KW-0472">Membrane</keyword>
<keyword id="KW-0602">Photosynthesis</keyword>
<keyword id="KW-0934">Plastid</keyword>
<keyword id="KW-0793">Thylakoid</keyword>
<keyword id="KW-0812">Transmembrane</keyword>
<keyword id="KW-1133">Transmembrane helix</keyword>
<keyword id="KW-0813">Transport</keyword>
<protein>
    <recommendedName>
        <fullName evidence="1">Cytochrome b6-f complex subunit 8</fullName>
    </recommendedName>
    <alternativeName>
        <fullName evidence="1">Cytochrome b6-f complex subunit PetN</fullName>
    </alternativeName>
    <alternativeName>
        <fullName evidence="1">Cytochrome b6-f complex subunit VIII</fullName>
    </alternativeName>
</protein>
<sequence length="29" mass="3170">MDIVSLAWAALMVVFTFSLSLVVWGRSGL</sequence>